<sequence>MKVKVERTTITKKTTTTKPKPDEEDNNDDNSSSNGVEVTATATATRETSDQLDFLPADLSATISTTTTPTATRATTTRNLILHPFDGMQSAPTLTTPTLTPTTLRSIDEAFYELTGETNNSVNAPFQAGFKPPPLALLPNSGPVVGIGSAVEAIVPAGNTLEIGHQPNLDVLSKLNYSNSIVGSDTDDSNASWNDQHRINGDTTDTSSGATDSTSYQNNSMLGNGSNGSGANNFTGALAANQSTGGRGANNNSNTNTSNSATPAARRGGGRRPNKAFNMTPEEEEKRRIRRERNKAAAARCRKRRVDQTNDLTEEVDALVKKGDTLKAEITTLTELRNQLKYVIEAHLPTCPKVRDDILSVSTCNGLIGPAALHSTGGSSCGSVHSNHSHNNNNNNNNSNDSSSGTITGFDATLNSTGRSHSPLDLKPVHIDENLLLAIKHEPLDNGLDSESSSLDQDGPPPAKRAVPLPTIAQLTASLTTPTNPNGGSLNTPIVSQAPVSFAAFAANANNPNSPTLNLLNKGPKARPNTLAVQRPFAAPMQLNASGTGGVVDGKGAPIQIQGVPIQTPSTGVFNFDSLMDGGTGLTPVSGPLIPNCSSQNKHPLELPTPTTEPSKLCPL</sequence>
<gene>
    <name evidence="2" type="primary">kay</name>
    <name type="ORF">GK11924</name>
</gene>
<evidence type="ECO:0000250" key="1"/>
<evidence type="ECO:0000250" key="2">
    <source>
        <dbReference type="UniProtKB" id="P21525"/>
    </source>
</evidence>
<evidence type="ECO:0000255" key="3"/>
<evidence type="ECO:0000255" key="4">
    <source>
        <dbReference type="PROSITE-ProRule" id="PRU00978"/>
    </source>
</evidence>
<evidence type="ECO:0000256" key="5">
    <source>
        <dbReference type="SAM" id="MobiDB-lite"/>
    </source>
</evidence>
<evidence type="ECO:0000312" key="6">
    <source>
        <dbReference type="EMBL" id="EDW81179.1"/>
    </source>
</evidence>
<accession>B4NBL5</accession>
<reference evidence="6" key="1">
    <citation type="journal article" date="2007" name="Nature">
        <title>Evolution of genes and genomes on the Drosophila phylogeny.</title>
        <authorList>
            <consortium name="Drosophila 12 genomes consortium"/>
        </authorList>
    </citation>
    <scope>NUCLEOTIDE SEQUENCE [LARGE SCALE GENOMIC DNA]</scope>
    <source>
        <strain evidence="6">Tucson 14030-0811.24</strain>
    </source>
</reference>
<feature type="chain" id="PRO_0000377392" description="Transcription factor kayak">
    <location>
        <begin position="1"/>
        <end position="620"/>
    </location>
</feature>
<feature type="domain" description="bZIP" evidence="4">
    <location>
        <begin position="284"/>
        <end position="347"/>
    </location>
</feature>
<feature type="region of interest" description="Disordered" evidence="5">
    <location>
        <begin position="1"/>
        <end position="36"/>
    </location>
</feature>
<feature type="region of interest" description="Disordered" evidence="5">
    <location>
        <begin position="184"/>
        <end position="288"/>
    </location>
</feature>
<feature type="region of interest" description="Basic motif" evidence="4">
    <location>
        <begin position="286"/>
        <end position="305"/>
    </location>
</feature>
<feature type="region of interest" description="Leucine-zipper" evidence="4">
    <location>
        <begin position="312"/>
        <end position="340"/>
    </location>
</feature>
<feature type="region of interest" description="Disordered" evidence="5">
    <location>
        <begin position="375"/>
        <end position="414"/>
    </location>
</feature>
<feature type="region of interest" description="Disordered" evidence="5">
    <location>
        <begin position="447"/>
        <end position="466"/>
    </location>
</feature>
<feature type="region of interest" description="Disordered" evidence="5">
    <location>
        <begin position="590"/>
        <end position="620"/>
    </location>
</feature>
<feature type="compositionally biased region" description="Polar residues" evidence="5">
    <location>
        <begin position="184"/>
        <end position="194"/>
    </location>
</feature>
<feature type="compositionally biased region" description="Low complexity" evidence="5">
    <location>
        <begin position="201"/>
        <end position="233"/>
    </location>
</feature>
<feature type="compositionally biased region" description="Low complexity" evidence="5">
    <location>
        <begin position="249"/>
        <end position="266"/>
    </location>
</feature>
<feature type="compositionally biased region" description="Low complexity" evidence="5">
    <location>
        <begin position="377"/>
        <end position="405"/>
    </location>
</feature>
<feature type="modified residue" description="Phosphoserine" evidence="2">
    <location>
        <position position="422"/>
    </location>
</feature>
<dbReference type="EMBL" id="CH964232">
    <property type="protein sequence ID" value="EDW81179.1"/>
    <property type="molecule type" value="Genomic_DNA"/>
</dbReference>
<dbReference type="SMR" id="B4NBL5"/>
<dbReference type="STRING" id="7260.B4NBL5"/>
<dbReference type="EnsemblMetazoa" id="XM_023178816.2">
    <property type="protein sequence ID" value="XP_023034584.1"/>
    <property type="gene ID" value="LOC6647957"/>
</dbReference>
<dbReference type="GeneID" id="6647957"/>
<dbReference type="KEGG" id="dwi:6647957"/>
<dbReference type="CTD" id="3772082"/>
<dbReference type="eggNOG" id="KOG1414">
    <property type="taxonomic scope" value="Eukaryota"/>
</dbReference>
<dbReference type="HOGENOM" id="CLU_020183_0_0_1"/>
<dbReference type="OMA" id="HQSLHFA"/>
<dbReference type="OrthoDB" id="5866312at2759"/>
<dbReference type="PhylomeDB" id="B4NBL5"/>
<dbReference type="ChiTaRS" id="kay">
    <property type="organism name" value="fly"/>
</dbReference>
<dbReference type="Proteomes" id="UP000007798">
    <property type="component" value="Unassembled WGS sequence"/>
</dbReference>
<dbReference type="GO" id="GO:0005634">
    <property type="term" value="C:nucleus"/>
    <property type="evidence" value="ECO:0000250"/>
    <property type="project" value="UniProtKB"/>
</dbReference>
<dbReference type="GO" id="GO:0003677">
    <property type="term" value="F:DNA binding"/>
    <property type="evidence" value="ECO:0000250"/>
    <property type="project" value="UniProtKB"/>
</dbReference>
<dbReference type="GO" id="GO:0000981">
    <property type="term" value="F:DNA-binding transcription factor activity, RNA polymerase II-specific"/>
    <property type="evidence" value="ECO:0007669"/>
    <property type="project" value="TreeGrafter"/>
</dbReference>
<dbReference type="GO" id="GO:0000978">
    <property type="term" value="F:RNA polymerase II cis-regulatory region sequence-specific DNA binding"/>
    <property type="evidence" value="ECO:0007669"/>
    <property type="project" value="TreeGrafter"/>
</dbReference>
<dbReference type="GO" id="GO:0009792">
    <property type="term" value="P:embryo development ending in birth or egg hatching"/>
    <property type="evidence" value="ECO:0000250"/>
    <property type="project" value="UniProtKB"/>
</dbReference>
<dbReference type="FunFam" id="1.20.5.170:FF:000006">
    <property type="entry name" value="fos-related antigen 2 isoform X1"/>
    <property type="match status" value="1"/>
</dbReference>
<dbReference type="Gene3D" id="1.20.5.170">
    <property type="match status" value="1"/>
</dbReference>
<dbReference type="InterPro" id="IPR000837">
    <property type="entry name" value="AP-1"/>
</dbReference>
<dbReference type="InterPro" id="IPR004827">
    <property type="entry name" value="bZIP"/>
</dbReference>
<dbReference type="InterPro" id="IPR046347">
    <property type="entry name" value="bZIP_sf"/>
</dbReference>
<dbReference type="PANTHER" id="PTHR23351:SF24">
    <property type="entry name" value="ACTIVATING TRANSCRIPTION FACTOR 3-RELATED"/>
    <property type="match status" value="1"/>
</dbReference>
<dbReference type="PANTHER" id="PTHR23351">
    <property type="entry name" value="FOS TRANSCRIPTION FACTOR-RELATED"/>
    <property type="match status" value="1"/>
</dbReference>
<dbReference type="Pfam" id="PF00170">
    <property type="entry name" value="bZIP_1"/>
    <property type="match status" value="1"/>
</dbReference>
<dbReference type="PRINTS" id="PR00042">
    <property type="entry name" value="LEUZIPPRFOS"/>
</dbReference>
<dbReference type="SMART" id="SM00338">
    <property type="entry name" value="BRLZ"/>
    <property type="match status" value="1"/>
</dbReference>
<dbReference type="SUPFAM" id="SSF57959">
    <property type="entry name" value="Leucine zipper domain"/>
    <property type="match status" value="1"/>
</dbReference>
<dbReference type="PROSITE" id="PS50217">
    <property type="entry name" value="BZIP"/>
    <property type="match status" value="1"/>
</dbReference>
<dbReference type="PROSITE" id="PS00036">
    <property type="entry name" value="BZIP_BASIC"/>
    <property type="match status" value="1"/>
</dbReference>
<proteinExistence type="inferred from homology"/>
<keyword id="KW-0010">Activator</keyword>
<keyword id="KW-0238">DNA-binding</keyword>
<keyword id="KW-0539">Nucleus</keyword>
<keyword id="KW-0597">Phosphoprotein</keyword>
<keyword id="KW-1185">Reference proteome</keyword>
<keyword id="KW-0804">Transcription</keyword>
<keyword id="KW-0805">Transcription regulation</keyword>
<protein>
    <recommendedName>
        <fullName evidence="2">Transcription factor kayak</fullName>
    </recommendedName>
</protein>
<comment type="function">
    <text evidence="2">Developmentally regulated transcription factor AP-1 binds and recognizes the enhancer DNA sequence: 5'-TGA[CG]TCA-3'. May play a role in the function or determination of a particular subset of cells in the developing embryo. It is able to carry out its function either independently of or in conjunction with Jra (By similarity).</text>
</comment>
<comment type="subunit">
    <text evidence="1">Homodimer. Heterodimer with Jra. The kay-Jra heterodimer binds more stably to the AP-1 site than either of the two proteins alone (By similarity).</text>
</comment>
<comment type="subcellular location">
    <subcellularLocation>
        <location evidence="2 4">Nucleus</location>
    </subcellularLocation>
</comment>
<comment type="similarity">
    <text evidence="3">Belongs to the bZIP family. Fos subfamily.</text>
</comment>
<organism>
    <name type="scientific">Drosophila willistoni</name>
    <name type="common">Fruit fly</name>
    <dbReference type="NCBI Taxonomy" id="7260"/>
    <lineage>
        <taxon>Eukaryota</taxon>
        <taxon>Metazoa</taxon>
        <taxon>Ecdysozoa</taxon>
        <taxon>Arthropoda</taxon>
        <taxon>Hexapoda</taxon>
        <taxon>Insecta</taxon>
        <taxon>Pterygota</taxon>
        <taxon>Neoptera</taxon>
        <taxon>Endopterygota</taxon>
        <taxon>Diptera</taxon>
        <taxon>Brachycera</taxon>
        <taxon>Muscomorpha</taxon>
        <taxon>Ephydroidea</taxon>
        <taxon>Drosophilidae</taxon>
        <taxon>Drosophila</taxon>
        <taxon>Sophophora</taxon>
    </lineage>
</organism>
<name>FOSL_DROWI</name>